<proteinExistence type="inferred from homology"/>
<reference key="1">
    <citation type="journal article" date="2001" name="Science">
        <title>Comparative genomics of Listeria species.</title>
        <authorList>
            <person name="Glaser P."/>
            <person name="Frangeul L."/>
            <person name="Buchrieser C."/>
            <person name="Rusniok C."/>
            <person name="Amend A."/>
            <person name="Baquero F."/>
            <person name="Berche P."/>
            <person name="Bloecker H."/>
            <person name="Brandt P."/>
            <person name="Chakraborty T."/>
            <person name="Charbit A."/>
            <person name="Chetouani F."/>
            <person name="Couve E."/>
            <person name="de Daruvar A."/>
            <person name="Dehoux P."/>
            <person name="Domann E."/>
            <person name="Dominguez-Bernal G."/>
            <person name="Duchaud E."/>
            <person name="Durant L."/>
            <person name="Dussurget O."/>
            <person name="Entian K.-D."/>
            <person name="Fsihi H."/>
            <person name="Garcia-del Portillo F."/>
            <person name="Garrido P."/>
            <person name="Gautier L."/>
            <person name="Goebel W."/>
            <person name="Gomez-Lopez N."/>
            <person name="Hain T."/>
            <person name="Hauf J."/>
            <person name="Jackson D."/>
            <person name="Jones L.-M."/>
            <person name="Kaerst U."/>
            <person name="Kreft J."/>
            <person name="Kuhn M."/>
            <person name="Kunst F."/>
            <person name="Kurapkat G."/>
            <person name="Madueno E."/>
            <person name="Maitournam A."/>
            <person name="Mata Vicente J."/>
            <person name="Ng E."/>
            <person name="Nedjari H."/>
            <person name="Nordsiek G."/>
            <person name="Novella S."/>
            <person name="de Pablos B."/>
            <person name="Perez-Diaz J.-C."/>
            <person name="Purcell R."/>
            <person name="Remmel B."/>
            <person name="Rose M."/>
            <person name="Schlueter T."/>
            <person name="Simoes N."/>
            <person name="Tierrez A."/>
            <person name="Vazquez-Boland J.-A."/>
            <person name="Voss H."/>
            <person name="Wehland J."/>
            <person name="Cossart P."/>
        </authorList>
    </citation>
    <scope>NUCLEOTIDE SEQUENCE [LARGE SCALE GENOMIC DNA]</scope>
    <source>
        <strain>ATCC BAA-679 / EGD-e</strain>
    </source>
</reference>
<organism>
    <name type="scientific">Listeria monocytogenes serovar 1/2a (strain ATCC BAA-679 / EGD-e)</name>
    <dbReference type="NCBI Taxonomy" id="169963"/>
    <lineage>
        <taxon>Bacteria</taxon>
        <taxon>Bacillati</taxon>
        <taxon>Bacillota</taxon>
        <taxon>Bacilli</taxon>
        <taxon>Bacillales</taxon>
        <taxon>Listeriaceae</taxon>
        <taxon>Listeria</taxon>
    </lineage>
</organism>
<keyword id="KW-0028">Amino-acid biosynthesis</keyword>
<keyword id="KW-0032">Aminotransferase</keyword>
<keyword id="KW-0963">Cytoplasm</keyword>
<keyword id="KW-0663">Pyridoxal phosphate</keyword>
<keyword id="KW-0664">Pyridoxine biosynthesis</keyword>
<keyword id="KW-1185">Reference proteome</keyword>
<keyword id="KW-0718">Serine biosynthesis</keyword>
<keyword id="KW-0808">Transferase</keyword>
<name>SERC_LISMO</name>
<accession>Q8Y3L0</accession>
<evidence type="ECO:0000255" key="1">
    <source>
        <dbReference type="HAMAP-Rule" id="MF_00160"/>
    </source>
</evidence>
<protein>
    <recommendedName>
        <fullName evidence="1">Phosphoserine aminotransferase</fullName>
        <ecNumber evidence="1">2.6.1.52</ecNumber>
    </recommendedName>
    <alternativeName>
        <fullName evidence="1">Phosphohydroxythreonine aminotransferase</fullName>
        <shortName evidence="1">PSAT</shortName>
    </alternativeName>
</protein>
<dbReference type="EC" id="2.6.1.52" evidence="1"/>
<dbReference type="EMBL" id="AL591984">
    <property type="protein sequence ID" value="CAD01038.1"/>
    <property type="molecule type" value="Genomic_DNA"/>
</dbReference>
<dbReference type="PIR" id="AH1427">
    <property type="entry name" value="AH1427"/>
</dbReference>
<dbReference type="RefSeq" id="NP_466347.1">
    <property type="nucleotide sequence ID" value="NC_003210.1"/>
</dbReference>
<dbReference type="RefSeq" id="WP_009931650.1">
    <property type="nucleotide sequence ID" value="NZ_CP149495.1"/>
</dbReference>
<dbReference type="SMR" id="Q8Y3L0"/>
<dbReference type="STRING" id="169963.gene:17595542"/>
<dbReference type="PaxDb" id="169963-lmo2825"/>
<dbReference type="EnsemblBacteria" id="CAD01038">
    <property type="protein sequence ID" value="CAD01038"/>
    <property type="gene ID" value="CAD01038"/>
</dbReference>
<dbReference type="GeneID" id="986637"/>
<dbReference type="KEGG" id="lmo:lmo2825"/>
<dbReference type="PATRIC" id="fig|169963.11.peg.2896"/>
<dbReference type="eggNOG" id="COG1932">
    <property type="taxonomic scope" value="Bacteria"/>
</dbReference>
<dbReference type="HOGENOM" id="CLU_034866_0_2_9"/>
<dbReference type="OrthoDB" id="9809412at2"/>
<dbReference type="PhylomeDB" id="Q8Y3L0"/>
<dbReference type="BioCyc" id="LMON169963:LMO2825-MONOMER"/>
<dbReference type="UniPathway" id="UPA00135">
    <property type="reaction ID" value="UER00197"/>
</dbReference>
<dbReference type="Proteomes" id="UP000000817">
    <property type="component" value="Chromosome"/>
</dbReference>
<dbReference type="GO" id="GO:0005737">
    <property type="term" value="C:cytoplasm"/>
    <property type="evidence" value="ECO:0000318"/>
    <property type="project" value="GO_Central"/>
</dbReference>
<dbReference type="GO" id="GO:0004648">
    <property type="term" value="F:O-phospho-L-serine:2-oxoglutarate aminotransferase activity"/>
    <property type="evidence" value="ECO:0000318"/>
    <property type="project" value="GO_Central"/>
</dbReference>
<dbReference type="GO" id="GO:0030170">
    <property type="term" value="F:pyridoxal phosphate binding"/>
    <property type="evidence" value="ECO:0000318"/>
    <property type="project" value="GO_Central"/>
</dbReference>
<dbReference type="GO" id="GO:0006564">
    <property type="term" value="P:L-serine biosynthetic process"/>
    <property type="evidence" value="ECO:0000318"/>
    <property type="project" value="GO_Central"/>
</dbReference>
<dbReference type="GO" id="GO:0008615">
    <property type="term" value="P:pyridoxine biosynthetic process"/>
    <property type="evidence" value="ECO:0007669"/>
    <property type="project" value="UniProtKB-KW"/>
</dbReference>
<dbReference type="FunFam" id="3.40.640.10:FF:000010">
    <property type="entry name" value="Phosphoserine aminotransferase"/>
    <property type="match status" value="1"/>
</dbReference>
<dbReference type="FunFam" id="3.90.1150.10:FF:000006">
    <property type="entry name" value="Phosphoserine aminotransferase"/>
    <property type="match status" value="1"/>
</dbReference>
<dbReference type="Gene3D" id="3.90.1150.10">
    <property type="entry name" value="Aspartate Aminotransferase, domain 1"/>
    <property type="match status" value="1"/>
</dbReference>
<dbReference type="Gene3D" id="3.40.640.10">
    <property type="entry name" value="Type I PLP-dependent aspartate aminotransferase-like (Major domain)"/>
    <property type="match status" value="1"/>
</dbReference>
<dbReference type="HAMAP" id="MF_00160">
    <property type="entry name" value="SerC_aminotrans_5"/>
    <property type="match status" value="1"/>
</dbReference>
<dbReference type="InterPro" id="IPR000192">
    <property type="entry name" value="Aminotrans_V_dom"/>
</dbReference>
<dbReference type="InterPro" id="IPR020578">
    <property type="entry name" value="Aminotrans_V_PyrdxlP_BS"/>
</dbReference>
<dbReference type="InterPro" id="IPR022278">
    <property type="entry name" value="Pser_aminoTfrase"/>
</dbReference>
<dbReference type="InterPro" id="IPR015424">
    <property type="entry name" value="PyrdxlP-dep_Trfase"/>
</dbReference>
<dbReference type="InterPro" id="IPR015421">
    <property type="entry name" value="PyrdxlP-dep_Trfase_major"/>
</dbReference>
<dbReference type="InterPro" id="IPR015422">
    <property type="entry name" value="PyrdxlP-dep_Trfase_small"/>
</dbReference>
<dbReference type="NCBIfam" id="NF003764">
    <property type="entry name" value="PRK05355.1"/>
    <property type="match status" value="1"/>
</dbReference>
<dbReference type="NCBIfam" id="TIGR01364">
    <property type="entry name" value="serC_1"/>
    <property type="match status" value="1"/>
</dbReference>
<dbReference type="PANTHER" id="PTHR43247">
    <property type="entry name" value="PHOSPHOSERINE AMINOTRANSFERASE"/>
    <property type="match status" value="1"/>
</dbReference>
<dbReference type="PANTHER" id="PTHR43247:SF1">
    <property type="entry name" value="PHOSPHOSERINE AMINOTRANSFERASE"/>
    <property type="match status" value="1"/>
</dbReference>
<dbReference type="Pfam" id="PF00266">
    <property type="entry name" value="Aminotran_5"/>
    <property type="match status" value="1"/>
</dbReference>
<dbReference type="PIRSF" id="PIRSF000525">
    <property type="entry name" value="SerC"/>
    <property type="match status" value="1"/>
</dbReference>
<dbReference type="SUPFAM" id="SSF53383">
    <property type="entry name" value="PLP-dependent transferases"/>
    <property type="match status" value="1"/>
</dbReference>
<dbReference type="PROSITE" id="PS00595">
    <property type="entry name" value="AA_TRANSFER_CLASS_5"/>
    <property type="match status" value="1"/>
</dbReference>
<sequence length="363" mass="39712">MERVYNFSAGPAVLPVPVLEKVQRELLSYNGSGMSVMELSHRSELFQNILDDAESLIRELMEIPDNYKVLFLQGGASLQFDMVPMNLANGKKAAYVNTGSWAKKAISEAKKIQGVEVEVIASSEDRNFSYIPEIPTVSSDVAYLHVTTNNTIEGTAMFDVPDSAVPVVADMSSNILSSVYDVKKFGLIYAGAQKNIGPAGLTLVIVREDLIGQVEGLPSMLDFKVQAENDSMYNTPPTFAIYVAKLVFEWIKEQGGVAGIEALNRKKAALLYDYIDQSDFFSSPVEPSARSLTNVPFVTNSAEFDKAFVKEAEANGFENLKGHRSVGGMRASLYNAFPIEGVEALIAFMEKFANARKGGEVRV</sequence>
<feature type="chain" id="PRO_0000150185" description="Phosphoserine aminotransferase">
    <location>
        <begin position="1"/>
        <end position="363"/>
    </location>
</feature>
<feature type="binding site" evidence="1">
    <location>
        <position position="42"/>
    </location>
    <ligand>
        <name>L-glutamate</name>
        <dbReference type="ChEBI" id="CHEBI:29985"/>
    </ligand>
</feature>
<feature type="binding site" evidence="1">
    <location>
        <begin position="76"/>
        <end position="77"/>
    </location>
    <ligand>
        <name>pyridoxal 5'-phosphate</name>
        <dbReference type="ChEBI" id="CHEBI:597326"/>
    </ligand>
</feature>
<feature type="binding site" evidence="1">
    <location>
        <position position="101"/>
    </location>
    <ligand>
        <name>pyridoxal 5'-phosphate</name>
        <dbReference type="ChEBI" id="CHEBI:597326"/>
    </ligand>
</feature>
<feature type="binding site" evidence="1">
    <location>
        <position position="151"/>
    </location>
    <ligand>
        <name>pyridoxal 5'-phosphate</name>
        <dbReference type="ChEBI" id="CHEBI:597326"/>
    </ligand>
</feature>
<feature type="binding site" evidence="1">
    <location>
        <position position="170"/>
    </location>
    <ligand>
        <name>pyridoxal 5'-phosphate</name>
        <dbReference type="ChEBI" id="CHEBI:597326"/>
    </ligand>
</feature>
<feature type="binding site" evidence="1">
    <location>
        <position position="193"/>
    </location>
    <ligand>
        <name>pyridoxal 5'-phosphate</name>
        <dbReference type="ChEBI" id="CHEBI:597326"/>
    </ligand>
</feature>
<feature type="binding site" evidence="1">
    <location>
        <begin position="234"/>
        <end position="235"/>
    </location>
    <ligand>
        <name>pyridoxal 5'-phosphate</name>
        <dbReference type="ChEBI" id="CHEBI:597326"/>
    </ligand>
</feature>
<feature type="modified residue" description="N6-(pyridoxal phosphate)lysine" evidence="1">
    <location>
        <position position="194"/>
    </location>
</feature>
<comment type="function">
    <text evidence="1">Catalyzes the reversible conversion of 3-phosphohydroxypyruvate to phosphoserine and of 3-hydroxy-2-oxo-4-phosphonooxybutanoate to phosphohydroxythreonine.</text>
</comment>
<comment type="catalytic activity">
    <reaction evidence="1">
        <text>O-phospho-L-serine + 2-oxoglutarate = 3-phosphooxypyruvate + L-glutamate</text>
        <dbReference type="Rhea" id="RHEA:14329"/>
        <dbReference type="ChEBI" id="CHEBI:16810"/>
        <dbReference type="ChEBI" id="CHEBI:18110"/>
        <dbReference type="ChEBI" id="CHEBI:29985"/>
        <dbReference type="ChEBI" id="CHEBI:57524"/>
        <dbReference type="EC" id="2.6.1.52"/>
    </reaction>
</comment>
<comment type="catalytic activity">
    <reaction evidence="1">
        <text>4-(phosphooxy)-L-threonine + 2-oxoglutarate = (R)-3-hydroxy-2-oxo-4-phosphooxybutanoate + L-glutamate</text>
        <dbReference type="Rhea" id="RHEA:16573"/>
        <dbReference type="ChEBI" id="CHEBI:16810"/>
        <dbReference type="ChEBI" id="CHEBI:29985"/>
        <dbReference type="ChEBI" id="CHEBI:58452"/>
        <dbReference type="ChEBI" id="CHEBI:58538"/>
        <dbReference type="EC" id="2.6.1.52"/>
    </reaction>
</comment>
<comment type="cofactor">
    <cofactor evidence="1">
        <name>pyridoxal 5'-phosphate</name>
        <dbReference type="ChEBI" id="CHEBI:597326"/>
    </cofactor>
    <text evidence="1">Binds 1 pyridoxal phosphate per subunit.</text>
</comment>
<comment type="pathway">
    <text evidence="1">Amino-acid biosynthesis; L-serine biosynthesis; L-serine from 3-phospho-D-glycerate: step 2/3.</text>
</comment>
<comment type="subunit">
    <text evidence="1">Homodimer.</text>
</comment>
<comment type="subcellular location">
    <subcellularLocation>
        <location evidence="1">Cytoplasm</location>
    </subcellularLocation>
</comment>
<comment type="similarity">
    <text evidence="1">Belongs to the class-V pyridoxal-phosphate-dependent aminotransferase family. SerC subfamily.</text>
</comment>
<gene>
    <name evidence="1" type="primary">serC</name>
    <name type="ordered locus">lmo2825</name>
</gene>